<sequence length="429" mass="47304">MKIQVETVSPVERKVTIEVDPDRVAKELDRAYASLSRRVKLRGFRPGKAPRKVLERQFKAEVEGEVAERIVTETFTEAVRVESLPVVAPPSVSITDGVAEGKPMRYSARVEVKPKLEPKDYKGLEVTRKPPEVTDESVSAELTKIQDSMAQLVAVEGRFEAQEGDWAVIDHEGTIDGKPFDGSTAEGVTVKVAPGPITEGNVEALKGKKIGDTVELDEPFPADHRDEALRGKTAHMKVTLKALKVRQAPALDDALAKELGIEGVETLDALRTRIRSDLEKREKRRAESELKDALVKAALAKNEFEVPPALVERAIDTMIEGAAERFARQGIDLRQLQLDVSRMRADLREQALLQVRGALLLEAIADAEKVEVTEEDLEAEAARIADELGMPLAKVQQQTRGKDAREALKNRIREEKALSLLSSAATIQQ</sequence>
<feature type="chain" id="PRO_0000256527" description="Trigger factor">
    <location>
        <begin position="1"/>
        <end position="429"/>
    </location>
</feature>
<feature type="domain" description="PPIase FKBP-type" evidence="1">
    <location>
        <begin position="164"/>
        <end position="249"/>
    </location>
</feature>
<proteinExistence type="inferred from homology"/>
<reference key="1">
    <citation type="submission" date="2006-01" db="EMBL/GenBank/DDBJ databases">
        <title>Complete sequence of Anaeromyxobacter dehalogenans 2CP-C.</title>
        <authorList>
            <person name="Copeland A."/>
            <person name="Lucas S."/>
            <person name="Lapidus A."/>
            <person name="Barry K."/>
            <person name="Detter J.C."/>
            <person name="Glavina T."/>
            <person name="Hammon N."/>
            <person name="Israni S."/>
            <person name="Pitluck S."/>
            <person name="Brettin T."/>
            <person name="Bruce D."/>
            <person name="Han C."/>
            <person name="Tapia R."/>
            <person name="Gilna P."/>
            <person name="Kiss H."/>
            <person name="Schmutz J."/>
            <person name="Larimer F."/>
            <person name="Land M."/>
            <person name="Kyrpides N."/>
            <person name="Anderson I."/>
            <person name="Sanford R.A."/>
            <person name="Ritalahti K.M."/>
            <person name="Thomas H.S."/>
            <person name="Kirby J.R."/>
            <person name="Zhulin I.B."/>
            <person name="Loeffler F.E."/>
            <person name="Richardson P."/>
        </authorList>
    </citation>
    <scope>NUCLEOTIDE SEQUENCE [LARGE SCALE GENOMIC DNA]</scope>
    <source>
        <strain>2CP-C</strain>
    </source>
</reference>
<dbReference type="EC" id="5.2.1.8" evidence="1"/>
<dbReference type="EMBL" id="CP000251">
    <property type="protein sequence ID" value="ABC83121.1"/>
    <property type="molecule type" value="Genomic_DNA"/>
</dbReference>
<dbReference type="RefSeq" id="WP_011422403.1">
    <property type="nucleotide sequence ID" value="NC_007760.1"/>
</dbReference>
<dbReference type="SMR" id="Q2IEW0"/>
<dbReference type="STRING" id="290397.Adeh_3354"/>
<dbReference type="KEGG" id="ade:Adeh_3354"/>
<dbReference type="eggNOG" id="COG0544">
    <property type="taxonomic scope" value="Bacteria"/>
</dbReference>
<dbReference type="HOGENOM" id="CLU_033058_3_2_7"/>
<dbReference type="OrthoDB" id="9767721at2"/>
<dbReference type="Proteomes" id="UP000001935">
    <property type="component" value="Chromosome"/>
</dbReference>
<dbReference type="GO" id="GO:0005737">
    <property type="term" value="C:cytoplasm"/>
    <property type="evidence" value="ECO:0007669"/>
    <property type="project" value="UniProtKB-SubCell"/>
</dbReference>
<dbReference type="GO" id="GO:0003755">
    <property type="term" value="F:peptidyl-prolyl cis-trans isomerase activity"/>
    <property type="evidence" value="ECO:0007669"/>
    <property type="project" value="UniProtKB-UniRule"/>
</dbReference>
<dbReference type="GO" id="GO:0044183">
    <property type="term" value="F:protein folding chaperone"/>
    <property type="evidence" value="ECO:0007669"/>
    <property type="project" value="TreeGrafter"/>
</dbReference>
<dbReference type="GO" id="GO:0043022">
    <property type="term" value="F:ribosome binding"/>
    <property type="evidence" value="ECO:0007669"/>
    <property type="project" value="TreeGrafter"/>
</dbReference>
<dbReference type="GO" id="GO:0051083">
    <property type="term" value="P:'de novo' cotranslational protein folding"/>
    <property type="evidence" value="ECO:0007669"/>
    <property type="project" value="TreeGrafter"/>
</dbReference>
<dbReference type="GO" id="GO:0051301">
    <property type="term" value="P:cell division"/>
    <property type="evidence" value="ECO:0007669"/>
    <property type="project" value="UniProtKB-KW"/>
</dbReference>
<dbReference type="GO" id="GO:0061077">
    <property type="term" value="P:chaperone-mediated protein folding"/>
    <property type="evidence" value="ECO:0007669"/>
    <property type="project" value="TreeGrafter"/>
</dbReference>
<dbReference type="GO" id="GO:0015031">
    <property type="term" value="P:protein transport"/>
    <property type="evidence" value="ECO:0007669"/>
    <property type="project" value="UniProtKB-UniRule"/>
</dbReference>
<dbReference type="GO" id="GO:0043335">
    <property type="term" value="P:protein unfolding"/>
    <property type="evidence" value="ECO:0007669"/>
    <property type="project" value="TreeGrafter"/>
</dbReference>
<dbReference type="Gene3D" id="3.10.50.40">
    <property type="match status" value="1"/>
</dbReference>
<dbReference type="Gene3D" id="3.30.70.1050">
    <property type="entry name" value="Trigger factor ribosome-binding domain"/>
    <property type="match status" value="1"/>
</dbReference>
<dbReference type="Gene3D" id="1.10.3120.10">
    <property type="entry name" value="Trigger factor, C-terminal domain"/>
    <property type="match status" value="1"/>
</dbReference>
<dbReference type="HAMAP" id="MF_00303">
    <property type="entry name" value="Trigger_factor_Tig"/>
    <property type="match status" value="1"/>
</dbReference>
<dbReference type="InterPro" id="IPR046357">
    <property type="entry name" value="PPIase_dom_sf"/>
</dbReference>
<dbReference type="InterPro" id="IPR001179">
    <property type="entry name" value="PPIase_FKBP_dom"/>
</dbReference>
<dbReference type="InterPro" id="IPR005215">
    <property type="entry name" value="Trig_fac"/>
</dbReference>
<dbReference type="InterPro" id="IPR008880">
    <property type="entry name" value="Trigger_fac_C"/>
</dbReference>
<dbReference type="InterPro" id="IPR037041">
    <property type="entry name" value="Trigger_fac_C_sf"/>
</dbReference>
<dbReference type="InterPro" id="IPR008881">
    <property type="entry name" value="Trigger_fac_ribosome-bd_bac"/>
</dbReference>
<dbReference type="InterPro" id="IPR036611">
    <property type="entry name" value="Trigger_fac_ribosome-bd_sf"/>
</dbReference>
<dbReference type="InterPro" id="IPR027304">
    <property type="entry name" value="Trigger_fact/SurA_dom_sf"/>
</dbReference>
<dbReference type="NCBIfam" id="TIGR00115">
    <property type="entry name" value="tig"/>
    <property type="match status" value="1"/>
</dbReference>
<dbReference type="PANTHER" id="PTHR30560">
    <property type="entry name" value="TRIGGER FACTOR CHAPERONE AND PEPTIDYL-PROLYL CIS/TRANS ISOMERASE"/>
    <property type="match status" value="1"/>
</dbReference>
<dbReference type="PANTHER" id="PTHR30560:SF3">
    <property type="entry name" value="TRIGGER FACTOR-LIKE PROTEIN TIG, CHLOROPLASTIC"/>
    <property type="match status" value="1"/>
</dbReference>
<dbReference type="Pfam" id="PF00254">
    <property type="entry name" value="FKBP_C"/>
    <property type="match status" value="1"/>
</dbReference>
<dbReference type="Pfam" id="PF05698">
    <property type="entry name" value="Trigger_C"/>
    <property type="match status" value="1"/>
</dbReference>
<dbReference type="Pfam" id="PF05697">
    <property type="entry name" value="Trigger_N"/>
    <property type="match status" value="1"/>
</dbReference>
<dbReference type="PIRSF" id="PIRSF003095">
    <property type="entry name" value="Trigger_factor"/>
    <property type="match status" value="1"/>
</dbReference>
<dbReference type="SUPFAM" id="SSF54534">
    <property type="entry name" value="FKBP-like"/>
    <property type="match status" value="1"/>
</dbReference>
<dbReference type="SUPFAM" id="SSF109998">
    <property type="entry name" value="Triger factor/SurA peptide-binding domain-like"/>
    <property type="match status" value="1"/>
</dbReference>
<dbReference type="SUPFAM" id="SSF102735">
    <property type="entry name" value="Trigger factor ribosome-binding domain"/>
    <property type="match status" value="1"/>
</dbReference>
<comment type="function">
    <text evidence="1">Involved in protein export. Acts as a chaperone by maintaining the newly synthesized protein in an open conformation. Functions as a peptidyl-prolyl cis-trans isomerase.</text>
</comment>
<comment type="catalytic activity">
    <reaction evidence="1">
        <text>[protein]-peptidylproline (omega=180) = [protein]-peptidylproline (omega=0)</text>
        <dbReference type="Rhea" id="RHEA:16237"/>
        <dbReference type="Rhea" id="RHEA-COMP:10747"/>
        <dbReference type="Rhea" id="RHEA-COMP:10748"/>
        <dbReference type="ChEBI" id="CHEBI:83833"/>
        <dbReference type="ChEBI" id="CHEBI:83834"/>
        <dbReference type="EC" id="5.2.1.8"/>
    </reaction>
</comment>
<comment type="subcellular location">
    <subcellularLocation>
        <location>Cytoplasm</location>
    </subcellularLocation>
    <text evidence="1">About half TF is bound to the ribosome near the polypeptide exit tunnel while the other half is free in the cytoplasm.</text>
</comment>
<comment type="domain">
    <text evidence="1">Consists of 3 domains; the N-terminus binds the ribosome, the middle domain has PPIase activity, while the C-terminus has intrinsic chaperone activity on its own.</text>
</comment>
<comment type="similarity">
    <text evidence="1">Belongs to the FKBP-type PPIase family. Tig subfamily.</text>
</comment>
<gene>
    <name evidence="1" type="primary">tig</name>
    <name type="ordered locus">Adeh_3354</name>
</gene>
<keyword id="KW-0131">Cell cycle</keyword>
<keyword id="KW-0132">Cell division</keyword>
<keyword id="KW-0143">Chaperone</keyword>
<keyword id="KW-0963">Cytoplasm</keyword>
<keyword id="KW-0413">Isomerase</keyword>
<keyword id="KW-1185">Reference proteome</keyword>
<keyword id="KW-0697">Rotamase</keyword>
<organism>
    <name type="scientific">Anaeromyxobacter dehalogenans (strain 2CP-C)</name>
    <dbReference type="NCBI Taxonomy" id="290397"/>
    <lineage>
        <taxon>Bacteria</taxon>
        <taxon>Pseudomonadati</taxon>
        <taxon>Myxococcota</taxon>
        <taxon>Myxococcia</taxon>
        <taxon>Myxococcales</taxon>
        <taxon>Cystobacterineae</taxon>
        <taxon>Anaeromyxobacteraceae</taxon>
        <taxon>Anaeromyxobacter</taxon>
    </lineage>
</organism>
<name>TIG_ANADE</name>
<protein>
    <recommendedName>
        <fullName evidence="1">Trigger factor</fullName>
        <shortName evidence="1">TF</shortName>
        <ecNumber evidence="1">5.2.1.8</ecNumber>
    </recommendedName>
    <alternativeName>
        <fullName evidence="1">PPIase</fullName>
    </alternativeName>
</protein>
<evidence type="ECO:0000255" key="1">
    <source>
        <dbReference type="HAMAP-Rule" id="MF_00303"/>
    </source>
</evidence>
<accession>Q2IEW0</accession>